<reference key="1">
    <citation type="submission" date="2007-02" db="EMBL/GenBank/DDBJ databases">
        <title>Complete sequence of Mycobacterium sp. JLS.</title>
        <authorList>
            <consortium name="US DOE Joint Genome Institute"/>
            <person name="Copeland A."/>
            <person name="Lucas S."/>
            <person name="Lapidus A."/>
            <person name="Barry K."/>
            <person name="Detter J.C."/>
            <person name="Glavina del Rio T."/>
            <person name="Hammon N."/>
            <person name="Israni S."/>
            <person name="Dalin E."/>
            <person name="Tice H."/>
            <person name="Pitluck S."/>
            <person name="Chain P."/>
            <person name="Malfatti S."/>
            <person name="Shin M."/>
            <person name="Vergez L."/>
            <person name="Schmutz J."/>
            <person name="Larimer F."/>
            <person name="Land M."/>
            <person name="Hauser L."/>
            <person name="Kyrpides N."/>
            <person name="Mikhailova N."/>
            <person name="Miller C.D."/>
            <person name="Anderson A.J."/>
            <person name="Sims R.C."/>
            <person name="Richardson P."/>
        </authorList>
    </citation>
    <scope>NUCLEOTIDE SEQUENCE [LARGE SCALE GENOMIC DNA]</scope>
    <source>
        <strain>JLS</strain>
    </source>
</reference>
<dbReference type="EC" id="2.5.1.19" evidence="1"/>
<dbReference type="EMBL" id="CP000580">
    <property type="protein sequence ID" value="ABN97198.1"/>
    <property type="molecule type" value="Genomic_DNA"/>
</dbReference>
<dbReference type="SMR" id="A3PWC1"/>
<dbReference type="KEGG" id="mjl:Mjls_1396"/>
<dbReference type="HOGENOM" id="CLU_024321_0_0_11"/>
<dbReference type="BioCyc" id="MSP164757:G1G8C-1411-MONOMER"/>
<dbReference type="UniPathway" id="UPA00053">
    <property type="reaction ID" value="UER00089"/>
</dbReference>
<dbReference type="GO" id="GO:0005737">
    <property type="term" value="C:cytoplasm"/>
    <property type="evidence" value="ECO:0007669"/>
    <property type="project" value="UniProtKB-SubCell"/>
</dbReference>
<dbReference type="GO" id="GO:0003866">
    <property type="term" value="F:3-phosphoshikimate 1-carboxyvinyltransferase activity"/>
    <property type="evidence" value="ECO:0007669"/>
    <property type="project" value="UniProtKB-UniRule"/>
</dbReference>
<dbReference type="GO" id="GO:0008652">
    <property type="term" value="P:amino acid biosynthetic process"/>
    <property type="evidence" value="ECO:0007669"/>
    <property type="project" value="UniProtKB-KW"/>
</dbReference>
<dbReference type="GO" id="GO:0009073">
    <property type="term" value="P:aromatic amino acid family biosynthetic process"/>
    <property type="evidence" value="ECO:0007669"/>
    <property type="project" value="UniProtKB-KW"/>
</dbReference>
<dbReference type="GO" id="GO:0009423">
    <property type="term" value="P:chorismate biosynthetic process"/>
    <property type="evidence" value="ECO:0007669"/>
    <property type="project" value="UniProtKB-UniRule"/>
</dbReference>
<dbReference type="CDD" id="cd01556">
    <property type="entry name" value="EPSP_synthase"/>
    <property type="match status" value="1"/>
</dbReference>
<dbReference type="FunFam" id="3.65.10.10:FF:000010">
    <property type="entry name" value="3-phosphoshikimate 1-carboxyvinyltransferase"/>
    <property type="match status" value="1"/>
</dbReference>
<dbReference type="FunFam" id="3.65.10.10:FF:000011">
    <property type="entry name" value="3-phosphoshikimate 1-carboxyvinyltransferase"/>
    <property type="match status" value="1"/>
</dbReference>
<dbReference type="Gene3D" id="3.65.10.10">
    <property type="entry name" value="Enolpyruvate transferase domain"/>
    <property type="match status" value="2"/>
</dbReference>
<dbReference type="HAMAP" id="MF_00210">
    <property type="entry name" value="EPSP_synth"/>
    <property type="match status" value="1"/>
</dbReference>
<dbReference type="InterPro" id="IPR001986">
    <property type="entry name" value="Enolpyruvate_Tfrase_dom"/>
</dbReference>
<dbReference type="InterPro" id="IPR036968">
    <property type="entry name" value="Enolpyruvate_Tfrase_sf"/>
</dbReference>
<dbReference type="InterPro" id="IPR006264">
    <property type="entry name" value="EPSP_synthase"/>
</dbReference>
<dbReference type="InterPro" id="IPR023193">
    <property type="entry name" value="EPSP_synthase_CS"/>
</dbReference>
<dbReference type="InterPro" id="IPR013792">
    <property type="entry name" value="RNA3'P_cycl/enolpyr_Trfase_a/b"/>
</dbReference>
<dbReference type="NCBIfam" id="TIGR01356">
    <property type="entry name" value="aroA"/>
    <property type="match status" value="1"/>
</dbReference>
<dbReference type="PANTHER" id="PTHR21090">
    <property type="entry name" value="AROM/DEHYDROQUINATE SYNTHASE"/>
    <property type="match status" value="1"/>
</dbReference>
<dbReference type="PANTHER" id="PTHR21090:SF5">
    <property type="entry name" value="PENTAFUNCTIONAL AROM POLYPEPTIDE"/>
    <property type="match status" value="1"/>
</dbReference>
<dbReference type="Pfam" id="PF00275">
    <property type="entry name" value="EPSP_synthase"/>
    <property type="match status" value="1"/>
</dbReference>
<dbReference type="PIRSF" id="PIRSF000505">
    <property type="entry name" value="EPSPS"/>
    <property type="match status" value="1"/>
</dbReference>
<dbReference type="SUPFAM" id="SSF55205">
    <property type="entry name" value="EPT/RTPC-like"/>
    <property type="match status" value="1"/>
</dbReference>
<dbReference type="PROSITE" id="PS00104">
    <property type="entry name" value="EPSP_SYNTHASE_1"/>
    <property type="match status" value="1"/>
</dbReference>
<dbReference type="PROSITE" id="PS00885">
    <property type="entry name" value="EPSP_SYNTHASE_2"/>
    <property type="match status" value="1"/>
</dbReference>
<name>AROA_MYCSJ</name>
<feature type="chain" id="PRO_0000325363" description="3-phosphoshikimate 1-carboxyvinyltransferase">
    <location>
        <begin position="1"/>
        <end position="438"/>
    </location>
</feature>
<feature type="active site" description="Proton acceptor" evidence="1">
    <location>
        <position position="314"/>
    </location>
</feature>
<feature type="binding site" evidence="1">
    <location>
        <position position="26"/>
    </location>
    <ligand>
        <name>3-phosphoshikimate</name>
        <dbReference type="ChEBI" id="CHEBI:145989"/>
    </ligand>
</feature>
<feature type="binding site" evidence="1">
    <location>
        <position position="26"/>
    </location>
    <ligand>
        <name>phosphoenolpyruvate</name>
        <dbReference type="ChEBI" id="CHEBI:58702"/>
    </ligand>
</feature>
<feature type="binding site" evidence="1">
    <location>
        <position position="27"/>
    </location>
    <ligand>
        <name>3-phosphoshikimate</name>
        <dbReference type="ChEBI" id="CHEBI:145989"/>
    </ligand>
</feature>
<feature type="binding site" evidence="1">
    <location>
        <position position="31"/>
    </location>
    <ligand>
        <name>3-phosphoshikimate</name>
        <dbReference type="ChEBI" id="CHEBI:145989"/>
    </ligand>
</feature>
<feature type="binding site" evidence="1">
    <location>
        <position position="99"/>
    </location>
    <ligand>
        <name>phosphoenolpyruvate</name>
        <dbReference type="ChEBI" id="CHEBI:58702"/>
    </ligand>
</feature>
<feature type="binding site" evidence="1">
    <location>
        <position position="127"/>
    </location>
    <ligand>
        <name>phosphoenolpyruvate</name>
        <dbReference type="ChEBI" id="CHEBI:58702"/>
    </ligand>
</feature>
<feature type="binding site" evidence="1">
    <location>
        <position position="170"/>
    </location>
    <ligand>
        <name>3-phosphoshikimate</name>
        <dbReference type="ChEBI" id="CHEBI:145989"/>
    </ligand>
</feature>
<feature type="binding site" evidence="1">
    <location>
        <position position="171"/>
    </location>
    <ligand>
        <name>3-phosphoshikimate</name>
        <dbReference type="ChEBI" id="CHEBI:145989"/>
    </ligand>
</feature>
<feature type="binding site" evidence="1">
    <location>
        <position position="172"/>
    </location>
    <ligand>
        <name>3-phosphoshikimate</name>
        <dbReference type="ChEBI" id="CHEBI:145989"/>
    </ligand>
</feature>
<feature type="binding site" evidence="1">
    <location>
        <position position="172"/>
    </location>
    <ligand>
        <name>phosphoenolpyruvate</name>
        <dbReference type="ChEBI" id="CHEBI:58702"/>
    </ligand>
</feature>
<feature type="binding site" evidence="1">
    <location>
        <position position="199"/>
    </location>
    <ligand>
        <name>3-phosphoshikimate</name>
        <dbReference type="ChEBI" id="CHEBI:145989"/>
    </ligand>
</feature>
<feature type="binding site" evidence="1">
    <location>
        <position position="314"/>
    </location>
    <ligand>
        <name>3-phosphoshikimate</name>
        <dbReference type="ChEBI" id="CHEBI:145989"/>
    </ligand>
</feature>
<feature type="binding site" evidence="1">
    <location>
        <position position="343"/>
    </location>
    <ligand>
        <name>3-phosphoshikimate</name>
        <dbReference type="ChEBI" id="CHEBI:145989"/>
    </ligand>
</feature>
<feature type="binding site" evidence="1">
    <location>
        <position position="347"/>
    </location>
    <ligand>
        <name>phosphoenolpyruvate</name>
        <dbReference type="ChEBI" id="CHEBI:58702"/>
    </ligand>
</feature>
<feature type="binding site" evidence="1">
    <location>
        <position position="388"/>
    </location>
    <ligand>
        <name>phosphoenolpyruvate</name>
        <dbReference type="ChEBI" id="CHEBI:58702"/>
    </ligand>
</feature>
<feature type="binding site" evidence="1">
    <location>
        <position position="413"/>
    </location>
    <ligand>
        <name>phosphoenolpyruvate</name>
        <dbReference type="ChEBI" id="CHEBI:58702"/>
    </ligand>
</feature>
<keyword id="KW-0028">Amino-acid biosynthesis</keyword>
<keyword id="KW-0057">Aromatic amino acid biosynthesis</keyword>
<keyword id="KW-0963">Cytoplasm</keyword>
<keyword id="KW-0808">Transferase</keyword>
<gene>
    <name evidence="1" type="primary">aroA</name>
    <name type="ordered locus">Mjls_1396</name>
</gene>
<proteinExistence type="inferred from homology"/>
<protein>
    <recommendedName>
        <fullName evidence="1">3-phosphoshikimate 1-carboxyvinyltransferase</fullName>
        <ecNumber evidence="1">2.5.1.19</ecNumber>
    </recommendedName>
    <alternativeName>
        <fullName evidence="1">5-enolpyruvylshikimate-3-phosphate synthase</fullName>
        <shortName evidence="1">EPSP synthase</shortName>
        <shortName evidence="1">EPSPS</shortName>
    </alternativeName>
</protein>
<evidence type="ECO:0000255" key="1">
    <source>
        <dbReference type="HAMAP-Rule" id="MF_00210"/>
    </source>
</evidence>
<organism>
    <name type="scientific">Mycobacterium sp. (strain JLS)</name>
    <dbReference type="NCBI Taxonomy" id="164757"/>
    <lineage>
        <taxon>Bacteria</taxon>
        <taxon>Bacillati</taxon>
        <taxon>Actinomycetota</taxon>
        <taxon>Actinomycetes</taxon>
        <taxon>Mycobacteriales</taxon>
        <taxon>Mycobacteriaceae</taxon>
        <taxon>Mycobacterium</taxon>
    </lineage>
</organism>
<comment type="function">
    <text evidence="1">Catalyzes the transfer of the enolpyruvyl moiety of phosphoenolpyruvate (PEP) to the 5-hydroxyl of shikimate-3-phosphate (S3P) to produce enolpyruvyl shikimate-3-phosphate and inorganic phosphate.</text>
</comment>
<comment type="catalytic activity">
    <reaction evidence="1">
        <text>3-phosphoshikimate + phosphoenolpyruvate = 5-O-(1-carboxyvinyl)-3-phosphoshikimate + phosphate</text>
        <dbReference type="Rhea" id="RHEA:21256"/>
        <dbReference type="ChEBI" id="CHEBI:43474"/>
        <dbReference type="ChEBI" id="CHEBI:57701"/>
        <dbReference type="ChEBI" id="CHEBI:58702"/>
        <dbReference type="ChEBI" id="CHEBI:145989"/>
        <dbReference type="EC" id="2.5.1.19"/>
    </reaction>
    <physiologicalReaction direction="left-to-right" evidence="1">
        <dbReference type="Rhea" id="RHEA:21257"/>
    </physiologicalReaction>
</comment>
<comment type="pathway">
    <text evidence="1">Metabolic intermediate biosynthesis; chorismate biosynthesis; chorismate from D-erythrose 4-phosphate and phosphoenolpyruvate: step 6/7.</text>
</comment>
<comment type="subunit">
    <text evidence="1">Monomer.</text>
</comment>
<comment type="subcellular location">
    <subcellularLocation>
        <location evidence="1">Cytoplasm</location>
    </subcellularLocation>
</comment>
<comment type="similarity">
    <text evidence="1">Belongs to the EPSP synthase family.</text>
</comment>
<sequence>MDGVSNWPAPSTPTPVHATLTIPGSKSQTNRALVLAALATPQGTSTISGALRSRDTDLMIGALQTLGFDVESVGTDSDLRVGGGLAPAAGARVDCGLAGTVLRFLPPVAALSTETVEFDGDEQARARPIAPLLAGLQSLGVRIDGDGLPFRVRGEGSVAGGTVEIDASASSQFVSGLMLSGALFRDGLTIVHTGESVPSAPHVAMTVSMLRDAGVEVDDTETNRWTVRPGRVAARHWTIEPDLSNAVPFLSAGVVSGGAVRVTGWPAVSTQPAAAIMAILEKVGAVVRQSESYLEVQGTRQYQGFDVDLHDVGELTPAVAALAAVATPGAVSRLRGVAHLRGHETDRLAALSAEINGLGGQCEETADGLVITAAPLHGGVWHSYADHRMAMAGAIVGLRTPGVEIEDIATTAKTLPEFPQMWADMLAGQTATDPEAGA</sequence>
<accession>A3PWC1</accession>